<proteinExistence type="inferred from homology"/>
<gene>
    <name evidence="1" type="primary">ureE</name>
</gene>
<comment type="function">
    <text evidence="1">Involved in urease metallocenter assembly. Binds nickel. Probably functions as a nickel donor during metallocenter assembly.</text>
</comment>
<comment type="subcellular location">
    <subcellularLocation>
        <location evidence="1">Cytoplasm</location>
    </subcellularLocation>
</comment>
<comment type="similarity">
    <text evidence="1">Belongs to the UreE family.</text>
</comment>
<feature type="chain" id="PRO_0000223461" description="Urease accessory protein UreE">
    <location>
        <begin position="1"/>
        <end position="228"/>
    </location>
</feature>
<feature type="region of interest" description="Disordered" evidence="2">
    <location>
        <begin position="193"/>
        <end position="228"/>
    </location>
</feature>
<feature type="compositionally biased region" description="Basic and acidic residues" evidence="2">
    <location>
        <begin position="204"/>
        <end position="228"/>
    </location>
</feature>
<dbReference type="EMBL" id="AY363686">
    <property type="protein sequence ID" value="AAR15138.1"/>
    <property type="molecule type" value="Genomic_DNA"/>
</dbReference>
<dbReference type="RefSeq" id="WP_032816444.1">
    <property type="nucleotide sequence ID" value="NZ_CTKU01000009.1"/>
</dbReference>
<dbReference type="SMR" id="Q6UR32"/>
<dbReference type="STRING" id="29485.CH64_1581"/>
<dbReference type="GeneID" id="45566896"/>
<dbReference type="OrthoDB" id="3394858at2"/>
<dbReference type="GO" id="GO:0005737">
    <property type="term" value="C:cytoplasm"/>
    <property type="evidence" value="ECO:0007669"/>
    <property type="project" value="UniProtKB-SubCell"/>
</dbReference>
<dbReference type="GO" id="GO:0016151">
    <property type="term" value="F:nickel cation binding"/>
    <property type="evidence" value="ECO:0007669"/>
    <property type="project" value="UniProtKB-UniRule"/>
</dbReference>
<dbReference type="GO" id="GO:0051082">
    <property type="term" value="F:unfolded protein binding"/>
    <property type="evidence" value="ECO:0007669"/>
    <property type="project" value="UniProtKB-UniRule"/>
</dbReference>
<dbReference type="GO" id="GO:0006457">
    <property type="term" value="P:protein folding"/>
    <property type="evidence" value="ECO:0007669"/>
    <property type="project" value="InterPro"/>
</dbReference>
<dbReference type="CDD" id="cd00571">
    <property type="entry name" value="UreE"/>
    <property type="match status" value="1"/>
</dbReference>
<dbReference type="Gene3D" id="2.60.260.20">
    <property type="entry name" value="Urease metallochaperone UreE, N-terminal domain"/>
    <property type="match status" value="1"/>
</dbReference>
<dbReference type="HAMAP" id="MF_00822">
    <property type="entry name" value="UreE"/>
    <property type="match status" value="1"/>
</dbReference>
<dbReference type="InterPro" id="IPR012406">
    <property type="entry name" value="UreE"/>
</dbReference>
<dbReference type="InterPro" id="IPR004029">
    <property type="entry name" value="UreE_N"/>
</dbReference>
<dbReference type="InterPro" id="IPR036118">
    <property type="entry name" value="UreE_N_sf"/>
</dbReference>
<dbReference type="NCBIfam" id="NF009761">
    <property type="entry name" value="PRK13262.1"/>
    <property type="match status" value="1"/>
</dbReference>
<dbReference type="Pfam" id="PF02814">
    <property type="entry name" value="UreE_N"/>
    <property type="match status" value="1"/>
</dbReference>
<dbReference type="PIRSF" id="PIRSF036402">
    <property type="entry name" value="Ureas_acces_UreE"/>
    <property type="match status" value="1"/>
</dbReference>
<dbReference type="SMART" id="SM00988">
    <property type="entry name" value="UreE_N"/>
    <property type="match status" value="1"/>
</dbReference>
<dbReference type="SUPFAM" id="SSF69287">
    <property type="entry name" value="Urease metallochaperone UreE, N-terminal domain"/>
    <property type="match status" value="1"/>
</dbReference>
<protein>
    <recommendedName>
        <fullName evidence="1">Urease accessory protein UreE</fullName>
    </recommendedName>
</protein>
<organism>
    <name type="scientific">Yersinia rohdei</name>
    <dbReference type="NCBI Taxonomy" id="29485"/>
    <lineage>
        <taxon>Bacteria</taxon>
        <taxon>Pseudomonadati</taxon>
        <taxon>Pseudomonadota</taxon>
        <taxon>Gammaproteobacteria</taxon>
        <taxon>Enterobacterales</taxon>
        <taxon>Yersiniaceae</taxon>
        <taxon>Yersinia</taxon>
    </lineage>
</organism>
<accession>Q6UR32</accession>
<keyword id="KW-0143">Chaperone</keyword>
<keyword id="KW-0963">Cytoplasm</keyword>
<keyword id="KW-0533">Nickel</keyword>
<keyword id="KW-0996">Nickel insertion</keyword>
<name>UREE_YERRO</name>
<sequence length="228" mass="25579">MILIEHILGNVKKDPVWQAKLKNATFDLLVLDQREAQKSRCRKSSTQGLDLGISLDRHVVLADGDVLAWDEKTNVAVVVQINLRDVMVIDLSELKTRSPDELIKTCFELGHALGNQHWKAVTKNNEVYVPLTVATTMMDSVMRTHGFQHLPFRFVKGAEILPRLSNSEARLLFGGAEDTDTHVHVASPLDEPHGSGLHIHGIHSHGDGHSHSHDDHDHDHNHDHDHKH</sequence>
<reference key="1">
    <citation type="submission" date="2003-08" db="EMBL/GenBank/DDBJ databases">
        <title>Yersinia rohdei urease gene locus (ureABCEFGD), and urea transporter gene (yut) and nickel transporter gene (ureH).</title>
        <authorList>
            <person name="Sebbane F."/>
            <person name="Lemaitre N."/>
            <person name="Simonet M."/>
        </authorList>
    </citation>
    <scope>NUCLEOTIDE SEQUENCE [GENOMIC DNA]</scope>
</reference>
<evidence type="ECO:0000255" key="1">
    <source>
        <dbReference type="HAMAP-Rule" id="MF_00822"/>
    </source>
</evidence>
<evidence type="ECO:0000256" key="2">
    <source>
        <dbReference type="SAM" id="MobiDB-lite"/>
    </source>
</evidence>